<organism>
    <name type="scientific">Bacillus cereus (strain 03BB102)</name>
    <dbReference type="NCBI Taxonomy" id="572264"/>
    <lineage>
        <taxon>Bacteria</taxon>
        <taxon>Bacillati</taxon>
        <taxon>Bacillota</taxon>
        <taxon>Bacilli</taxon>
        <taxon>Bacillales</taxon>
        <taxon>Bacillaceae</taxon>
        <taxon>Bacillus</taxon>
        <taxon>Bacillus cereus group</taxon>
    </lineage>
</organism>
<reference key="1">
    <citation type="submission" date="2009-02" db="EMBL/GenBank/DDBJ databases">
        <title>Genome sequence of Bacillus cereus 03BB102.</title>
        <authorList>
            <person name="Dodson R.J."/>
            <person name="Jackson P."/>
            <person name="Munk A.C."/>
            <person name="Brettin T."/>
            <person name="Bruce D."/>
            <person name="Detter C."/>
            <person name="Tapia R."/>
            <person name="Han C."/>
            <person name="Sutton G."/>
            <person name="Sims D."/>
        </authorList>
    </citation>
    <scope>NUCLEOTIDE SEQUENCE [LARGE SCALE GENOMIC DNA]</scope>
    <source>
        <strain>03BB102</strain>
    </source>
</reference>
<gene>
    <name evidence="1" type="primary">deoB</name>
    <name type="ordered locus">BCA_4199</name>
</gene>
<accession>C1EQW1</accession>
<dbReference type="EC" id="5.4.2.7" evidence="1"/>
<dbReference type="EMBL" id="CP001407">
    <property type="protein sequence ID" value="ACO28080.1"/>
    <property type="molecule type" value="Genomic_DNA"/>
</dbReference>
<dbReference type="RefSeq" id="WP_001046067.1">
    <property type="nucleotide sequence ID" value="NZ_CP009318.1"/>
</dbReference>
<dbReference type="SMR" id="C1EQW1"/>
<dbReference type="KEGG" id="bcx:BCA_4199"/>
<dbReference type="PATRIC" id="fig|572264.18.peg.4151"/>
<dbReference type="UniPathway" id="UPA00002">
    <property type="reaction ID" value="UER00467"/>
</dbReference>
<dbReference type="Proteomes" id="UP000002210">
    <property type="component" value="Chromosome"/>
</dbReference>
<dbReference type="GO" id="GO:0005829">
    <property type="term" value="C:cytosol"/>
    <property type="evidence" value="ECO:0007669"/>
    <property type="project" value="TreeGrafter"/>
</dbReference>
<dbReference type="GO" id="GO:0000287">
    <property type="term" value="F:magnesium ion binding"/>
    <property type="evidence" value="ECO:0007669"/>
    <property type="project" value="InterPro"/>
</dbReference>
<dbReference type="GO" id="GO:0030145">
    <property type="term" value="F:manganese ion binding"/>
    <property type="evidence" value="ECO:0007669"/>
    <property type="project" value="UniProtKB-UniRule"/>
</dbReference>
<dbReference type="GO" id="GO:0008973">
    <property type="term" value="F:phosphopentomutase activity"/>
    <property type="evidence" value="ECO:0007669"/>
    <property type="project" value="UniProtKB-UniRule"/>
</dbReference>
<dbReference type="GO" id="GO:0006018">
    <property type="term" value="P:2-deoxyribose 1-phosphate catabolic process"/>
    <property type="evidence" value="ECO:0007669"/>
    <property type="project" value="UniProtKB-UniRule"/>
</dbReference>
<dbReference type="GO" id="GO:0006015">
    <property type="term" value="P:5-phosphoribose 1-diphosphate biosynthetic process"/>
    <property type="evidence" value="ECO:0007669"/>
    <property type="project" value="UniProtKB-UniPathway"/>
</dbReference>
<dbReference type="GO" id="GO:0043094">
    <property type="term" value="P:metabolic compound salvage"/>
    <property type="evidence" value="ECO:0007669"/>
    <property type="project" value="InterPro"/>
</dbReference>
<dbReference type="GO" id="GO:0009117">
    <property type="term" value="P:nucleotide metabolic process"/>
    <property type="evidence" value="ECO:0007669"/>
    <property type="project" value="InterPro"/>
</dbReference>
<dbReference type="CDD" id="cd16009">
    <property type="entry name" value="PPM"/>
    <property type="match status" value="1"/>
</dbReference>
<dbReference type="FunFam" id="3.30.70.1250:FF:000001">
    <property type="entry name" value="Phosphopentomutase"/>
    <property type="match status" value="1"/>
</dbReference>
<dbReference type="Gene3D" id="3.40.720.10">
    <property type="entry name" value="Alkaline Phosphatase, subunit A"/>
    <property type="match status" value="1"/>
</dbReference>
<dbReference type="Gene3D" id="3.30.70.1250">
    <property type="entry name" value="Phosphopentomutase"/>
    <property type="match status" value="1"/>
</dbReference>
<dbReference type="HAMAP" id="MF_00740">
    <property type="entry name" value="Phosphopentomut"/>
    <property type="match status" value="1"/>
</dbReference>
<dbReference type="InterPro" id="IPR017850">
    <property type="entry name" value="Alkaline_phosphatase_core_sf"/>
</dbReference>
<dbReference type="InterPro" id="IPR010045">
    <property type="entry name" value="DeoB"/>
</dbReference>
<dbReference type="InterPro" id="IPR006124">
    <property type="entry name" value="Metalloenzyme"/>
</dbReference>
<dbReference type="InterPro" id="IPR024052">
    <property type="entry name" value="Phosphopentomutase_DeoB_cap_sf"/>
</dbReference>
<dbReference type="NCBIfam" id="TIGR01696">
    <property type="entry name" value="deoB"/>
    <property type="match status" value="1"/>
</dbReference>
<dbReference type="NCBIfam" id="NF003766">
    <property type="entry name" value="PRK05362.1"/>
    <property type="match status" value="1"/>
</dbReference>
<dbReference type="PANTHER" id="PTHR21110">
    <property type="entry name" value="PHOSPHOPENTOMUTASE"/>
    <property type="match status" value="1"/>
</dbReference>
<dbReference type="PANTHER" id="PTHR21110:SF0">
    <property type="entry name" value="PHOSPHOPENTOMUTASE"/>
    <property type="match status" value="1"/>
</dbReference>
<dbReference type="Pfam" id="PF01676">
    <property type="entry name" value="Metalloenzyme"/>
    <property type="match status" value="1"/>
</dbReference>
<dbReference type="PIRSF" id="PIRSF001491">
    <property type="entry name" value="Ppentomutase"/>
    <property type="match status" value="1"/>
</dbReference>
<dbReference type="SUPFAM" id="SSF53649">
    <property type="entry name" value="Alkaline phosphatase-like"/>
    <property type="match status" value="1"/>
</dbReference>
<dbReference type="SUPFAM" id="SSF143856">
    <property type="entry name" value="DeoB insert domain-like"/>
    <property type="match status" value="1"/>
</dbReference>
<proteinExistence type="inferred from homology"/>
<comment type="function">
    <text evidence="1">Isomerase that catalyzes the conversion of deoxy-ribose 1-phosphate (dRib-1-P) and ribose 1-phosphate (Rib-1-P) to deoxy-ribose 5-phosphate (dRib-5-P) and ribose 5-phosphate (Rib-5-P), respectively.</text>
</comment>
<comment type="catalytic activity">
    <reaction evidence="1">
        <text>2-deoxy-alpha-D-ribose 1-phosphate = 2-deoxy-D-ribose 5-phosphate</text>
        <dbReference type="Rhea" id="RHEA:27658"/>
        <dbReference type="ChEBI" id="CHEBI:57259"/>
        <dbReference type="ChEBI" id="CHEBI:62877"/>
        <dbReference type="EC" id="5.4.2.7"/>
    </reaction>
</comment>
<comment type="catalytic activity">
    <reaction evidence="1">
        <text>alpha-D-ribose 1-phosphate = D-ribose 5-phosphate</text>
        <dbReference type="Rhea" id="RHEA:18793"/>
        <dbReference type="ChEBI" id="CHEBI:57720"/>
        <dbReference type="ChEBI" id="CHEBI:78346"/>
        <dbReference type="EC" id="5.4.2.7"/>
    </reaction>
</comment>
<comment type="cofactor">
    <cofactor evidence="1">
        <name>Mn(2+)</name>
        <dbReference type="ChEBI" id="CHEBI:29035"/>
    </cofactor>
    <text evidence="1">Binds 2 manganese ions.</text>
</comment>
<comment type="pathway">
    <text evidence="1">Carbohydrate degradation; 2-deoxy-D-ribose 1-phosphate degradation; D-glyceraldehyde 3-phosphate and acetaldehyde from 2-deoxy-alpha-D-ribose 1-phosphate: step 1/2.</text>
</comment>
<comment type="subcellular location">
    <subcellularLocation>
        <location evidence="1">Cytoplasm</location>
    </subcellularLocation>
</comment>
<comment type="similarity">
    <text evidence="1">Belongs to the phosphopentomutase family.</text>
</comment>
<name>DEOB_BACC3</name>
<sequence>MNKYKRIFLVVMDSVGIGEAPDAEQFGDLGSDTIGHIAEHMNGLHMPNMVKLGLGNIREMKGISKVEKPLGYYTKMQEKSTGKDTMTGHWEIMGLYIDTPFQVFPEGFPKELLDELEEKTGRKIIGNKPASGTEILDELGQEQMETGSLIVYTSADSVLQIAAHEEVVPLDELYKICKIARELTLDEKYMVGRVIARPFVGEPGNFTRTPNRHDYALKPFGRTVMNELKDSDYDVIAIGKISDIYDGEGVTESLRTKSNMDGMDKLVDTLNMDFTGLSFLNLVDFDALFGHRRDPQGYGEALQEYDARLPEVFEKLKEDDLLLITADHGNDPVHHGTDHTREYVPLLAYSPSMKEGGQELPLRQTFADIGATVAENFGVKMPEYGTSFLNELKK</sequence>
<feature type="chain" id="PRO_1000189773" description="Phosphopentomutase">
    <location>
        <begin position="1"/>
        <end position="394"/>
    </location>
</feature>
<feature type="binding site" evidence="1">
    <location>
        <position position="13"/>
    </location>
    <ligand>
        <name>Mn(2+)</name>
        <dbReference type="ChEBI" id="CHEBI:29035"/>
        <label>1</label>
    </ligand>
</feature>
<feature type="binding site" evidence="1">
    <location>
        <position position="286"/>
    </location>
    <ligand>
        <name>Mn(2+)</name>
        <dbReference type="ChEBI" id="CHEBI:29035"/>
        <label>2</label>
    </ligand>
</feature>
<feature type="binding site" evidence="1">
    <location>
        <position position="291"/>
    </location>
    <ligand>
        <name>Mn(2+)</name>
        <dbReference type="ChEBI" id="CHEBI:29035"/>
        <label>2</label>
    </ligand>
</feature>
<feature type="binding site" evidence="1">
    <location>
        <position position="327"/>
    </location>
    <ligand>
        <name>Mn(2+)</name>
        <dbReference type="ChEBI" id="CHEBI:29035"/>
        <label>1</label>
    </ligand>
</feature>
<feature type="binding site" evidence="1">
    <location>
        <position position="328"/>
    </location>
    <ligand>
        <name>Mn(2+)</name>
        <dbReference type="ChEBI" id="CHEBI:29035"/>
        <label>1</label>
    </ligand>
</feature>
<feature type="binding site" evidence="1">
    <location>
        <position position="339"/>
    </location>
    <ligand>
        <name>Mn(2+)</name>
        <dbReference type="ChEBI" id="CHEBI:29035"/>
        <label>2</label>
    </ligand>
</feature>
<protein>
    <recommendedName>
        <fullName evidence="1">Phosphopentomutase</fullName>
        <ecNumber evidence="1">5.4.2.7</ecNumber>
    </recommendedName>
    <alternativeName>
        <fullName evidence="1">Phosphodeoxyribomutase</fullName>
    </alternativeName>
</protein>
<evidence type="ECO:0000255" key="1">
    <source>
        <dbReference type="HAMAP-Rule" id="MF_00740"/>
    </source>
</evidence>
<keyword id="KW-0963">Cytoplasm</keyword>
<keyword id="KW-0413">Isomerase</keyword>
<keyword id="KW-0464">Manganese</keyword>
<keyword id="KW-0479">Metal-binding</keyword>